<organism>
    <name type="scientific">Schizosaccharomyces pombe (strain 972 / ATCC 24843)</name>
    <name type="common">Fission yeast</name>
    <dbReference type="NCBI Taxonomy" id="284812"/>
    <lineage>
        <taxon>Eukaryota</taxon>
        <taxon>Fungi</taxon>
        <taxon>Dikarya</taxon>
        <taxon>Ascomycota</taxon>
        <taxon>Taphrinomycotina</taxon>
        <taxon>Schizosaccharomycetes</taxon>
        <taxon>Schizosaccharomycetales</taxon>
        <taxon>Schizosaccharomycetaceae</taxon>
        <taxon>Schizosaccharomyces</taxon>
    </lineage>
</organism>
<proteinExistence type="inferred from homology"/>
<evidence type="ECO:0000250" key="1"/>
<evidence type="ECO:0000255" key="2"/>
<evidence type="ECO:0000269" key="3">
    <source>
    </source>
</evidence>
<evidence type="ECO:0000305" key="4"/>
<protein>
    <recommendedName>
        <fullName>Probable translation initiation factor, mitochondrial</fullName>
    </recommendedName>
</protein>
<dbReference type="EMBL" id="CU329671">
    <property type="protein sequence ID" value="CAB58168.2"/>
    <property type="molecule type" value="Genomic_DNA"/>
</dbReference>
<dbReference type="SMR" id="Q76PC7"/>
<dbReference type="BioGRID" id="277324">
    <property type="interactions" value="1"/>
</dbReference>
<dbReference type="FunCoup" id="Q76PC7">
    <property type="interactions" value="202"/>
</dbReference>
<dbReference type="STRING" id="284812.Q76PC7"/>
<dbReference type="iPTMnet" id="Q76PC7"/>
<dbReference type="PaxDb" id="4896-SPBC18E5.13.1"/>
<dbReference type="EnsemblFungi" id="SPBC18E5.13.1">
    <property type="protein sequence ID" value="SPBC18E5.13.1:pep"/>
    <property type="gene ID" value="SPBC18E5.13"/>
</dbReference>
<dbReference type="KEGG" id="spo:2540805"/>
<dbReference type="PomBase" id="SPBC18E5.13"/>
<dbReference type="VEuPathDB" id="FungiDB:SPBC18E5.13"/>
<dbReference type="HOGENOM" id="CLU_1200408_0_0_1"/>
<dbReference type="InParanoid" id="Q76PC7"/>
<dbReference type="OMA" id="EHPICVY"/>
<dbReference type="PhylomeDB" id="Q76PC7"/>
<dbReference type="PRO" id="PR:Q76PC7"/>
<dbReference type="Proteomes" id="UP000002485">
    <property type="component" value="Chromosome II"/>
</dbReference>
<dbReference type="GO" id="GO:0005759">
    <property type="term" value="C:mitochondrial matrix"/>
    <property type="evidence" value="ECO:0000314"/>
    <property type="project" value="PomBase"/>
</dbReference>
<dbReference type="GO" id="GO:0005739">
    <property type="term" value="C:mitochondrion"/>
    <property type="evidence" value="ECO:0007005"/>
    <property type="project" value="PomBase"/>
</dbReference>
<dbReference type="GO" id="GO:0097177">
    <property type="term" value="F:mitochondrial ribosome binding"/>
    <property type="evidence" value="ECO:0000269"/>
    <property type="project" value="PomBase"/>
</dbReference>
<dbReference type="GO" id="GO:0043022">
    <property type="term" value="F:ribosome binding"/>
    <property type="evidence" value="ECO:0000318"/>
    <property type="project" value="GO_Central"/>
</dbReference>
<dbReference type="GO" id="GO:0003743">
    <property type="term" value="F:translation initiation factor activity"/>
    <property type="evidence" value="ECO:0000269"/>
    <property type="project" value="PomBase"/>
</dbReference>
<dbReference type="GO" id="GO:0070124">
    <property type="term" value="P:mitochondrial translational initiation"/>
    <property type="evidence" value="ECO:0000269"/>
    <property type="project" value="PomBase"/>
</dbReference>
<dbReference type="GO" id="GO:0032790">
    <property type="term" value="P:ribosome disassembly"/>
    <property type="evidence" value="ECO:0000318"/>
    <property type="project" value="GO_Central"/>
</dbReference>
<dbReference type="FunFam" id="3.30.110.10:FF:000006">
    <property type="entry name" value="Probable translation initiation factor, mitochondrial"/>
    <property type="match status" value="1"/>
</dbReference>
<dbReference type="Gene3D" id="3.30.110.10">
    <property type="entry name" value="Translation initiation factor 3 (IF-3), C-terminal domain"/>
    <property type="match status" value="1"/>
</dbReference>
<dbReference type="InterPro" id="IPR036788">
    <property type="entry name" value="T_IF-3_C_sf"/>
</dbReference>
<dbReference type="InterPro" id="IPR001288">
    <property type="entry name" value="Translation_initiation_fac_3"/>
</dbReference>
<dbReference type="PANTHER" id="PTHR10938">
    <property type="entry name" value="TRANSLATION INITIATION FACTOR IF-3"/>
    <property type="match status" value="1"/>
</dbReference>
<dbReference type="PANTHER" id="PTHR10938:SF0">
    <property type="entry name" value="TRANSLATION INITIATION FACTOR IF-3, MITOCHONDRIAL"/>
    <property type="match status" value="1"/>
</dbReference>
<dbReference type="SUPFAM" id="SSF55200">
    <property type="entry name" value="Translation initiation factor IF3, C-terminal domain"/>
    <property type="match status" value="1"/>
</dbReference>
<feature type="transit peptide" description="Mitochondrion" evidence="2">
    <location>
        <begin position="1"/>
        <end position="39"/>
    </location>
</feature>
<feature type="chain" id="PRO_0000353835" description="Probable translation initiation factor, mitochondrial">
    <location>
        <begin position="40"/>
        <end position="233"/>
    </location>
</feature>
<gene>
    <name type="ORF">SPBC18E5.13</name>
</gene>
<accession>Q76PC7</accession>
<keyword id="KW-0396">Initiation factor</keyword>
<keyword id="KW-0496">Mitochondrion</keyword>
<keyword id="KW-0648">Protein biosynthesis</keyword>
<keyword id="KW-1185">Reference proteome</keyword>
<keyword id="KW-0809">Transit peptide</keyword>
<reference key="1">
    <citation type="journal article" date="2002" name="Nature">
        <title>The genome sequence of Schizosaccharomyces pombe.</title>
        <authorList>
            <person name="Wood V."/>
            <person name="Gwilliam R."/>
            <person name="Rajandream M.A."/>
            <person name="Lyne M.H."/>
            <person name="Lyne R."/>
            <person name="Stewart A."/>
            <person name="Sgouros J.G."/>
            <person name="Peat N."/>
            <person name="Hayles J."/>
            <person name="Baker S.G."/>
            <person name="Basham D."/>
            <person name="Bowman S."/>
            <person name="Brooks K."/>
            <person name="Brown D."/>
            <person name="Brown S."/>
            <person name="Chillingworth T."/>
            <person name="Churcher C.M."/>
            <person name="Collins M."/>
            <person name="Connor R."/>
            <person name="Cronin A."/>
            <person name="Davis P."/>
            <person name="Feltwell T."/>
            <person name="Fraser A."/>
            <person name="Gentles S."/>
            <person name="Goble A."/>
            <person name="Hamlin N."/>
            <person name="Harris D.E."/>
            <person name="Hidalgo J."/>
            <person name="Hodgson G."/>
            <person name="Holroyd S."/>
            <person name="Hornsby T."/>
            <person name="Howarth S."/>
            <person name="Huckle E.J."/>
            <person name="Hunt S."/>
            <person name="Jagels K."/>
            <person name="James K.D."/>
            <person name="Jones L."/>
            <person name="Jones M."/>
            <person name="Leather S."/>
            <person name="McDonald S."/>
            <person name="McLean J."/>
            <person name="Mooney P."/>
            <person name="Moule S."/>
            <person name="Mungall K.L."/>
            <person name="Murphy L.D."/>
            <person name="Niblett D."/>
            <person name="Odell C."/>
            <person name="Oliver K."/>
            <person name="O'Neil S."/>
            <person name="Pearson D."/>
            <person name="Quail M.A."/>
            <person name="Rabbinowitsch E."/>
            <person name="Rutherford K.M."/>
            <person name="Rutter S."/>
            <person name="Saunders D."/>
            <person name="Seeger K."/>
            <person name="Sharp S."/>
            <person name="Skelton J."/>
            <person name="Simmonds M.N."/>
            <person name="Squares R."/>
            <person name="Squares S."/>
            <person name="Stevens K."/>
            <person name="Taylor K."/>
            <person name="Taylor R.G."/>
            <person name="Tivey A."/>
            <person name="Walsh S.V."/>
            <person name="Warren T."/>
            <person name="Whitehead S."/>
            <person name="Woodward J.R."/>
            <person name="Volckaert G."/>
            <person name="Aert R."/>
            <person name="Robben J."/>
            <person name="Grymonprez B."/>
            <person name="Weltjens I."/>
            <person name="Vanstreels E."/>
            <person name="Rieger M."/>
            <person name="Schaefer M."/>
            <person name="Mueller-Auer S."/>
            <person name="Gabel C."/>
            <person name="Fuchs M."/>
            <person name="Duesterhoeft A."/>
            <person name="Fritzc C."/>
            <person name="Holzer E."/>
            <person name="Moestl D."/>
            <person name="Hilbert H."/>
            <person name="Borzym K."/>
            <person name="Langer I."/>
            <person name="Beck A."/>
            <person name="Lehrach H."/>
            <person name="Reinhardt R."/>
            <person name="Pohl T.M."/>
            <person name="Eger P."/>
            <person name="Zimmermann W."/>
            <person name="Wedler H."/>
            <person name="Wambutt R."/>
            <person name="Purnelle B."/>
            <person name="Goffeau A."/>
            <person name="Cadieu E."/>
            <person name="Dreano S."/>
            <person name="Gloux S."/>
            <person name="Lelaure V."/>
            <person name="Mottier S."/>
            <person name="Galibert F."/>
            <person name="Aves S.J."/>
            <person name="Xiang Z."/>
            <person name="Hunt C."/>
            <person name="Moore K."/>
            <person name="Hurst S.M."/>
            <person name="Lucas M."/>
            <person name="Rochet M."/>
            <person name="Gaillardin C."/>
            <person name="Tallada V.A."/>
            <person name="Garzon A."/>
            <person name="Thode G."/>
            <person name="Daga R.R."/>
            <person name="Cruzado L."/>
            <person name="Jimenez J."/>
            <person name="Sanchez M."/>
            <person name="del Rey F."/>
            <person name="Benito J."/>
            <person name="Dominguez A."/>
            <person name="Revuelta J.L."/>
            <person name="Moreno S."/>
            <person name="Armstrong J."/>
            <person name="Forsburg S.L."/>
            <person name="Cerutti L."/>
            <person name="Lowe T."/>
            <person name="McCombie W.R."/>
            <person name="Paulsen I."/>
            <person name="Potashkin J."/>
            <person name="Shpakovski G.V."/>
            <person name="Ussery D."/>
            <person name="Barrell B.G."/>
            <person name="Nurse P."/>
        </authorList>
    </citation>
    <scope>NUCLEOTIDE SEQUENCE [LARGE SCALE GENOMIC DNA]</scope>
    <source>
        <strain>972 / ATCC 24843</strain>
    </source>
</reference>
<reference key="2">
    <citation type="journal article" date="2006" name="Nat. Biotechnol.">
        <title>ORFeome cloning and global analysis of protein localization in the fission yeast Schizosaccharomyces pombe.</title>
        <authorList>
            <person name="Matsuyama A."/>
            <person name="Arai R."/>
            <person name="Yashiroda Y."/>
            <person name="Shirai A."/>
            <person name="Kamata A."/>
            <person name="Sekido S."/>
            <person name="Kobayashi Y."/>
            <person name="Hashimoto A."/>
            <person name="Hamamoto M."/>
            <person name="Hiraoka Y."/>
            <person name="Horinouchi S."/>
            <person name="Yoshida M."/>
        </authorList>
    </citation>
    <scope>SUBCELLULAR LOCATION [LARGE SCALE ANALYSIS]</scope>
</reference>
<comment type="function">
    <text evidence="1">May be involved in mitochondrial translation initiation.</text>
</comment>
<comment type="subcellular location">
    <subcellularLocation>
        <location evidence="3">Mitochondrion</location>
    </subcellularLocation>
</comment>
<comment type="similarity">
    <text evidence="4">Belongs to the IF-3 family.</text>
</comment>
<name>IF3M_SCHPO</name>
<sequence>MNSYLQFPHRKLFIQFSYSLTSVFRKCQSRTFMNSQFASAKLSNSIKKYFDGRIDESIKYQEIFIRGLENKGKLSKTSLVEALARVRAKPETVLYKVADPNENNKYPICSIISYTELSKLRENQSSRLREAEKSKHKNKTRTRYVLFSWRTDVNDIERKLKSVKDFLQDGNIVEIHVQNKKRSQPVSQEVRDSILSKIQLEIEGLGKDMKPPIVNSHSATFLLQPLVSKSSEL</sequence>